<accession>Q89AG5</accession>
<keyword id="KW-1185">Reference proteome</keyword>
<dbReference type="EMBL" id="AE016826">
    <property type="protein sequence ID" value="AAO27049.1"/>
    <property type="molecule type" value="Genomic_DNA"/>
</dbReference>
<dbReference type="RefSeq" id="WP_011091450.1">
    <property type="nucleotide sequence ID" value="NC_004545.1"/>
</dbReference>
<dbReference type="SMR" id="Q89AG5"/>
<dbReference type="STRING" id="224915.bbp_327"/>
<dbReference type="KEGG" id="bab:bbp_327"/>
<dbReference type="eggNOG" id="COG0537">
    <property type="taxonomic scope" value="Bacteria"/>
</dbReference>
<dbReference type="HOGENOM" id="CLU_056776_8_1_6"/>
<dbReference type="OrthoDB" id="9784774at2"/>
<dbReference type="Proteomes" id="UP000000601">
    <property type="component" value="Chromosome"/>
</dbReference>
<dbReference type="GO" id="GO:0003824">
    <property type="term" value="F:catalytic activity"/>
    <property type="evidence" value="ECO:0007669"/>
    <property type="project" value="InterPro"/>
</dbReference>
<dbReference type="CDD" id="cd01276">
    <property type="entry name" value="PKCI_related"/>
    <property type="match status" value="1"/>
</dbReference>
<dbReference type="Gene3D" id="3.30.428.10">
    <property type="entry name" value="HIT-like"/>
    <property type="match status" value="1"/>
</dbReference>
<dbReference type="InterPro" id="IPR019808">
    <property type="entry name" value="Histidine_triad_CS"/>
</dbReference>
<dbReference type="InterPro" id="IPR001310">
    <property type="entry name" value="Histidine_triad_HIT"/>
</dbReference>
<dbReference type="InterPro" id="IPR011146">
    <property type="entry name" value="HIT-like"/>
</dbReference>
<dbReference type="InterPro" id="IPR036265">
    <property type="entry name" value="HIT-like_sf"/>
</dbReference>
<dbReference type="PANTHER" id="PTHR23089">
    <property type="entry name" value="HISTIDINE TRIAD HIT PROTEIN"/>
    <property type="match status" value="1"/>
</dbReference>
<dbReference type="Pfam" id="PF01230">
    <property type="entry name" value="HIT"/>
    <property type="match status" value="1"/>
</dbReference>
<dbReference type="PRINTS" id="PR00332">
    <property type="entry name" value="HISTRIAD"/>
</dbReference>
<dbReference type="SUPFAM" id="SSF54197">
    <property type="entry name" value="HIT-like"/>
    <property type="match status" value="1"/>
</dbReference>
<dbReference type="PROSITE" id="PS00892">
    <property type="entry name" value="HIT_1"/>
    <property type="match status" value="1"/>
</dbReference>
<dbReference type="PROSITE" id="PS51084">
    <property type="entry name" value="HIT_2"/>
    <property type="match status" value="1"/>
</dbReference>
<organism>
    <name type="scientific">Buchnera aphidicola subsp. Baizongia pistaciae (strain Bp)</name>
    <dbReference type="NCBI Taxonomy" id="224915"/>
    <lineage>
        <taxon>Bacteria</taxon>
        <taxon>Pseudomonadati</taxon>
        <taxon>Pseudomonadota</taxon>
        <taxon>Gammaproteobacteria</taxon>
        <taxon>Enterobacterales</taxon>
        <taxon>Erwiniaceae</taxon>
        <taxon>Buchnera</taxon>
    </lineage>
</organism>
<name>YHIT_BUCBP</name>
<evidence type="ECO:0000255" key="1">
    <source>
        <dbReference type="PROSITE-ProRule" id="PRU00464"/>
    </source>
</evidence>
<reference key="1">
    <citation type="journal article" date="2003" name="Proc. Natl. Acad. Sci. U.S.A.">
        <title>Reductive genome evolution in Buchnera aphidicola.</title>
        <authorList>
            <person name="van Ham R.C.H.J."/>
            <person name="Kamerbeek J."/>
            <person name="Palacios C."/>
            <person name="Rausell C."/>
            <person name="Abascal F."/>
            <person name="Bastolla U."/>
            <person name="Fernandez J.M."/>
            <person name="Jimenez L."/>
            <person name="Postigo M."/>
            <person name="Silva F.J."/>
            <person name="Tamames J."/>
            <person name="Viguera E."/>
            <person name="Latorre A."/>
            <person name="Valencia A."/>
            <person name="Moran F."/>
            <person name="Moya A."/>
        </authorList>
    </citation>
    <scope>NUCLEOTIDE SEQUENCE [LARGE SCALE GENOMIC DNA]</scope>
    <source>
        <strain>Bp</strain>
    </source>
</reference>
<gene>
    <name type="ordered locus">bbp_327</name>
</gene>
<sequence length="112" mass="12949">MCQNIFQKIIKGIIPSKIIYQDKEITAFHDINPIAPIHILVVPNLLIKSLNEINENNKHILGNMLYISIKIAKKFKIDKNGYRLIINCNQHGRQEIQHLHLHLLGGKKLNKI</sequence>
<proteinExistence type="predicted"/>
<feature type="chain" id="PRO_0000109814" description="Uncharacterized HIT-like protein bbp_327">
    <location>
        <begin position="1"/>
        <end position="112"/>
    </location>
</feature>
<feature type="domain" description="HIT" evidence="1">
    <location>
        <begin position="5"/>
        <end position="112"/>
    </location>
</feature>
<feature type="short sequence motif" description="Histidine triad motif">
    <location>
        <begin position="98"/>
        <end position="102"/>
    </location>
</feature>
<protein>
    <recommendedName>
        <fullName>Uncharacterized HIT-like protein bbp_327</fullName>
    </recommendedName>
</protein>